<dbReference type="EMBL" id="CP000830">
    <property type="protein sequence ID" value="ABV92050.1"/>
    <property type="molecule type" value="Genomic_DNA"/>
</dbReference>
<dbReference type="RefSeq" id="WP_012176980.1">
    <property type="nucleotide sequence ID" value="NC_009952.1"/>
</dbReference>
<dbReference type="SMR" id="A8LM73"/>
<dbReference type="STRING" id="398580.Dshi_0301"/>
<dbReference type="KEGG" id="dsh:Dshi_0301"/>
<dbReference type="eggNOG" id="COG0256">
    <property type="taxonomic scope" value="Bacteria"/>
</dbReference>
<dbReference type="HOGENOM" id="CLU_098841_0_1_5"/>
<dbReference type="OrthoDB" id="9810939at2"/>
<dbReference type="Proteomes" id="UP000006833">
    <property type="component" value="Chromosome"/>
</dbReference>
<dbReference type="GO" id="GO:0022625">
    <property type="term" value="C:cytosolic large ribosomal subunit"/>
    <property type="evidence" value="ECO:0007669"/>
    <property type="project" value="TreeGrafter"/>
</dbReference>
<dbReference type="GO" id="GO:0008097">
    <property type="term" value="F:5S rRNA binding"/>
    <property type="evidence" value="ECO:0007669"/>
    <property type="project" value="TreeGrafter"/>
</dbReference>
<dbReference type="GO" id="GO:0003735">
    <property type="term" value="F:structural constituent of ribosome"/>
    <property type="evidence" value="ECO:0007669"/>
    <property type="project" value="InterPro"/>
</dbReference>
<dbReference type="GO" id="GO:0006412">
    <property type="term" value="P:translation"/>
    <property type="evidence" value="ECO:0007669"/>
    <property type="project" value="UniProtKB-UniRule"/>
</dbReference>
<dbReference type="CDD" id="cd00432">
    <property type="entry name" value="Ribosomal_L18_L5e"/>
    <property type="match status" value="1"/>
</dbReference>
<dbReference type="FunFam" id="3.30.420.100:FF:000001">
    <property type="entry name" value="50S ribosomal protein L18"/>
    <property type="match status" value="1"/>
</dbReference>
<dbReference type="Gene3D" id="3.30.420.100">
    <property type="match status" value="1"/>
</dbReference>
<dbReference type="HAMAP" id="MF_01337_B">
    <property type="entry name" value="Ribosomal_uL18_B"/>
    <property type="match status" value="1"/>
</dbReference>
<dbReference type="InterPro" id="IPR004389">
    <property type="entry name" value="Ribosomal_uL18_bac-type"/>
</dbReference>
<dbReference type="InterPro" id="IPR005484">
    <property type="entry name" value="Ribosomal_uL18_bac/euk"/>
</dbReference>
<dbReference type="NCBIfam" id="TIGR00060">
    <property type="entry name" value="L18_bact"/>
    <property type="match status" value="1"/>
</dbReference>
<dbReference type="PANTHER" id="PTHR12899">
    <property type="entry name" value="39S RIBOSOMAL PROTEIN L18, MITOCHONDRIAL"/>
    <property type="match status" value="1"/>
</dbReference>
<dbReference type="PANTHER" id="PTHR12899:SF3">
    <property type="entry name" value="LARGE RIBOSOMAL SUBUNIT PROTEIN UL18M"/>
    <property type="match status" value="1"/>
</dbReference>
<dbReference type="Pfam" id="PF00861">
    <property type="entry name" value="Ribosomal_L18p"/>
    <property type="match status" value="1"/>
</dbReference>
<dbReference type="SUPFAM" id="SSF53137">
    <property type="entry name" value="Translational machinery components"/>
    <property type="match status" value="1"/>
</dbReference>
<evidence type="ECO:0000255" key="1">
    <source>
        <dbReference type="HAMAP-Rule" id="MF_01337"/>
    </source>
</evidence>
<evidence type="ECO:0000305" key="2"/>
<comment type="function">
    <text evidence="1">This is one of the proteins that bind and probably mediate the attachment of the 5S RNA into the large ribosomal subunit, where it forms part of the central protuberance.</text>
</comment>
<comment type="subunit">
    <text evidence="1">Part of the 50S ribosomal subunit; part of the 5S rRNA/L5/L18/L25 subcomplex. Contacts the 5S and 23S rRNAs.</text>
</comment>
<comment type="similarity">
    <text evidence="1">Belongs to the universal ribosomal protein uL18 family.</text>
</comment>
<sequence>MANSKRDLFLKRRLRVRNKLKKMADGRPRLSVHRSGKNISVQLIDDVQGRTLAAASSLEKDLGIVGKNNVEASAKVGAAIAERAKKAGIEECYFDRGGFLFHGKVKALADAAREGGLKF</sequence>
<name>RL18_DINSH</name>
<proteinExistence type="inferred from homology"/>
<keyword id="KW-1185">Reference proteome</keyword>
<keyword id="KW-0687">Ribonucleoprotein</keyword>
<keyword id="KW-0689">Ribosomal protein</keyword>
<keyword id="KW-0694">RNA-binding</keyword>
<keyword id="KW-0699">rRNA-binding</keyword>
<reference key="1">
    <citation type="journal article" date="2010" name="ISME J.">
        <title>The complete genome sequence of the algal symbiont Dinoroseobacter shibae: a hitchhiker's guide to life in the sea.</title>
        <authorList>
            <person name="Wagner-Dobler I."/>
            <person name="Ballhausen B."/>
            <person name="Berger M."/>
            <person name="Brinkhoff T."/>
            <person name="Buchholz I."/>
            <person name="Bunk B."/>
            <person name="Cypionka H."/>
            <person name="Daniel R."/>
            <person name="Drepper T."/>
            <person name="Gerdts G."/>
            <person name="Hahnke S."/>
            <person name="Han C."/>
            <person name="Jahn D."/>
            <person name="Kalhoefer D."/>
            <person name="Kiss H."/>
            <person name="Klenk H.P."/>
            <person name="Kyrpides N."/>
            <person name="Liebl W."/>
            <person name="Liesegang H."/>
            <person name="Meincke L."/>
            <person name="Pati A."/>
            <person name="Petersen J."/>
            <person name="Piekarski T."/>
            <person name="Pommerenke C."/>
            <person name="Pradella S."/>
            <person name="Pukall R."/>
            <person name="Rabus R."/>
            <person name="Stackebrandt E."/>
            <person name="Thole S."/>
            <person name="Thompson L."/>
            <person name="Tielen P."/>
            <person name="Tomasch J."/>
            <person name="von Jan M."/>
            <person name="Wanphrut N."/>
            <person name="Wichels A."/>
            <person name="Zech H."/>
            <person name="Simon M."/>
        </authorList>
    </citation>
    <scope>NUCLEOTIDE SEQUENCE [LARGE SCALE GENOMIC DNA]</scope>
    <source>
        <strain>DSM 16493 / NCIMB 14021 / DFL 12</strain>
    </source>
</reference>
<feature type="chain" id="PRO_1000086663" description="Large ribosomal subunit protein uL18">
    <location>
        <begin position="1"/>
        <end position="119"/>
    </location>
</feature>
<organism>
    <name type="scientific">Dinoroseobacter shibae (strain DSM 16493 / NCIMB 14021 / DFL 12)</name>
    <dbReference type="NCBI Taxonomy" id="398580"/>
    <lineage>
        <taxon>Bacteria</taxon>
        <taxon>Pseudomonadati</taxon>
        <taxon>Pseudomonadota</taxon>
        <taxon>Alphaproteobacteria</taxon>
        <taxon>Rhodobacterales</taxon>
        <taxon>Roseobacteraceae</taxon>
        <taxon>Dinoroseobacter</taxon>
    </lineage>
</organism>
<accession>A8LM73</accession>
<protein>
    <recommendedName>
        <fullName evidence="1">Large ribosomal subunit protein uL18</fullName>
    </recommendedName>
    <alternativeName>
        <fullName evidence="2">50S ribosomal protein L18</fullName>
    </alternativeName>
</protein>
<gene>
    <name evidence="1" type="primary">rplR</name>
    <name type="ordered locus">Dshi_0301</name>
</gene>